<comment type="function">
    <text evidence="1">Catalyzes the interconversion of L-rhamnose and L-rhamnulose.</text>
</comment>
<comment type="catalytic activity">
    <reaction evidence="1">
        <text>L-rhamnopyranose = L-rhamnulose</text>
        <dbReference type="Rhea" id="RHEA:23160"/>
        <dbReference type="ChEBI" id="CHEBI:17897"/>
        <dbReference type="ChEBI" id="CHEBI:62346"/>
        <dbReference type="EC" id="5.3.1.14"/>
    </reaction>
</comment>
<comment type="cofactor">
    <cofactor evidence="1">
        <name>Mn(2+)</name>
        <dbReference type="ChEBI" id="CHEBI:29035"/>
    </cofactor>
    <text evidence="1">Binds 1 Mn(2+) ion per subunit.</text>
</comment>
<comment type="pathway">
    <text evidence="1">Carbohydrate degradation; L-rhamnose degradation; glycerone phosphate from L-rhamnose: step 1/3.</text>
</comment>
<comment type="subunit">
    <text evidence="1">Homotetramer.</text>
</comment>
<comment type="subcellular location">
    <subcellularLocation>
        <location evidence="1">Cytoplasm</location>
    </subcellularLocation>
</comment>
<comment type="similarity">
    <text evidence="1">Belongs to the rhamnose isomerase family.</text>
</comment>
<name>RHAA_ECO81</name>
<proteinExistence type="inferred from homology"/>
<sequence length="419" mass="47336">MTTQLEQAWELAKQRFAAVGIDVEEALRQLDRLPVSMHCWQSDDVSGFENPEGLLTGGIQATGNYPGKARNASELRADLEQAMRLIPGPKRLNLHAIYLESDTPVSRDQIKPEHFKNWVEWAKANQLGLDFNPSCFSHPLSADGFTLSHADDRIRQFWIDHCKASRRVSAYFGEQLGTPSVMNIWIPDGMKDITVDRLAPRQRLLAALDEVISEKLNPAHHIDAVESKLFGIGAESYTVGSNEFYLGYATSRQTALCLDAGHFHPTEVISDKISAAMLYVPQLLLHVSRPVRWDSDHVVLLDDETQAIASEIVRHDLFDQVHIGLDFFDASINRIAAWVIGTRNMKKALLRALLEPTAELRKLEAAGDYTARLALLEEQKSLPWQAVWEMYCQRHDTPAGSEWLENVRTYEKEILSRRG</sequence>
<keyword id="KW-0963">Cytoplasm</keyword>
<keyword id="KW-0413">Isomerase</keyword>
<keyword id="KW-0464">Manganese</keyword>
<keyword id="KW-0479">Metal-binding</keyword>
<keyword id="KW-0684">Rhamnose metabolism</keyword>
<organism>
    <name type="scientific">Escherichia coli O81 (strain ED1a)</name>
    <dbReference type="NCBI Taxonomy" id="585397"/>
    <lineage>
        <taxon>Bacteria</taxon>
        <taxon>Pseudomonadati</taxon>
        <taxon>Pseudomonadota</taxon>
        <taxon>Gammaproteobacteria</taxon>
        <taxon>Enterobacterales</taxon>
        <taxon>Enterobacteriaceae</taxon>
        <taxon>Escherichia</taxon>
    </lineage>
</organism>
<dbReference type="EC" id="5.3.1.14" evidence="1"/>
<dbReference type="EMBL" id="CU928162">
    <property type="protein sequence ID" value="CAR10576.1"/>
    <property type="molecule type" value="Genomic_DNA"/>
</dbReference>
<dbReference type="RefSeq" id="WP_012601816.1">
    <property type="nucleotide sequence ID" value="NC_011745.1"/>
</dbReference>
<dbReference type="SMR" id="B7MQZ3"/>
<dbReference type="KEGG" id="ecq:ECED1_4604"/>
<dbReference type="HOGENOM" id="CLU_052790_0_0_6"/>
<dbReference type="UniPathway" id="UPA00541">
    <property type="reaction ID" value="UER00601"/>
</dbReference>
<dbReference type="Proteomes" id="UP000000748">
    <property type="component" value="Chromosome"/>
</dbReference>
<dbReference type="GO" id="GO:0005737">
    <property type="term" value="C:cytoplasm"/>
    <property type="evidence" value="ECO:0007669"/>
    <property type="project" value="UniProtKB-SubCell"/>
</dbReference>
<dbReference type="GO" id="GO:0008740">
    <property type="term" value="F:L-rhamnose isomerase activity"/>
    <property type="evidence" value="ECO:0007669"/>
    <property type="project" value="UniProtKB-UniRule"/>
</dbReference>
<dbReference type="GO" id="GO:0030145">
    <property type="term" value="F:manganese ion binding"/>
    <property type="evidence" value="ECO:0007669"/>
    <property type="project" value="UniProtKB-UniRule"/>
</dbReference>
<dbReference type="GO" id="GO:0019324">
    <property type="term" value="P:L-lyxose metabolic process"/>
    <property type="evidence" value="ECO:0007669"/>
    <property type="project" value="TreeGrafter"/>
</dbReference>
<dbReference type="GO" id="GO:0019301">
    <property type="term" value="P:rhamnose catabolic process"/>
    <property type="evidence" value="ECO:0007669"/>
    <property type="project" value="UniProtKB-UniRule"/>
</dbReference>
<dbReference type="FunFam" id="3.20.20.150:FF:000006">
    <property type="entry name" value="L-rhamnose isomerase"/>
    <property type="match status" value="1"/>
</dbReference>
<dbReference type="Gene3D" id="3.20.20.150">
    <property type="entry name" value="Divalent-metal-dependent TIM barrel enzymes"/>
    <property type="match status" value="1"/>
</dbReference>
<dbReference type="HAMAP" id="MF_00541">
    <property type="entry name" value="RhaA"/>
    <property type="match status" value="1"/>
</dbReference>
<dbReference type="InterPro" id="IPR050337">
    <property type="entry name" value="L-rhamnose_isomerase"/>
</dbReference>
<dbReference type="InterPro" id="IPR009308">
    <property type="entry name" value="Rhamnose_isomerase"/>
</dbReference>
<dbReference type="InterPro" id="IPR036237">
    <property type="entry name" value="Xyl_isomerase-like_sf"/>
</dbReference>
<dbReference type="NCBIfam" id="NF002203">
    <property type="entry name" value="PRK01076.1"/>
    <property type="match status" value="1"/>
</dbReference>
<dbReference type="NCBIfam" id="TIGR01748">
    <property type="entry name" value="rhaA"/>
    <property type="match status" value="1"/>
</dbReference>
<dbReference type="PANTHER" id="PTHR30268">
    <property type="entry name" value="L-RHAMNOSE ISOMERASE"/>
    <property type="match status" value="1"/>
</dbReference>
<dbReference type="PANTHER" id="PTHR30268:SF0">
    <property type="entry name" value="L-RHAMNOSE ISOMERASE"/>
    <property type="match status" value="1"/>
</dbReference>
<dbReference type="Pfam" id="PF06134">
    <property type="entry name" value="RhaA"/>
    <property type="match status" value="1"/>
</dbReference>
<dbReference type="SUPFAM" id="SSF51658">
    <property type="entry name" value="Xylose isomerase-like"/>
    <property type="match status" value="1"/>
</dbReference>
<reference key="1">
    <citation type="journal article" date="2009" name="PLoS Genet.">
        <title>Organised genome dynamics in the Escherichia coli species results in highly diverse adaptive paths.</title>
        <authorList>
            <person name="Touchon M."/>
            <person name="Hoede C."/>
            <person name="Tenaillon O."/>
            <person name="Barbe V."/>
            <person name="Baeriswyl S."/>
            <person name="Bidet P."/>
            <person name="Bingen E."/>
            <person name="Bonacorsi S."/>
            <person name="Bouchier C."/>
            <person name="Bouvet O."/>
            <person name="Calteau A."/>
            <person name="Chiapello H."/>
            <person name="Clermont O."/>
            <person name="Cruveiller S."/>
            <person name="Danchin A."/>
            <person name="Diard M."/>
            <person name="Dossat C."/>
            <person name="Karoui M.E."/>
            <person name="Frapy E."/>
            <person name="Garry L."/>
            <person name="Ghigo J.M."/>
            <person name="Gilles A.M."/>
            <person name="Johnson J."/>
            <person name="Le Bouguenec C."/>
            <person name="Lescat M."/>
            <person name="Mangenot S."/>
            <person name="Martinez-Jehanne V."/>
            <person name="Matic I."/>
            <person name="Nassif X."/>
            <person name="Oztas S."/>
            <person name="Petit M.A."/>
            <person name="Pichon C."/>
            <person name="Rouy Z."/>
            <person name="Ruf C.S."/>
            <person name="Schneider D."/>
            <person name="Tourret J."/>
            <person name="Vacherie B."/>
            <person name="Vallenet D."/>
            <person name="Medigue C."/>
            <person name="Rocha E.P.C."/>
            <person name="Denamur E."/>
        </authorList>
    </citation>
    <scope>NUCLEOTIDE SEQUENCE [LARGE SCALE GENOMIC DNA]</scope>
    <source>
        <strain>ED1a</strain>
    </source>
</reference>
<protein>
    <recommendedName>
        <fullName evidence="1">L-rhamnose isomerase</fullName>
        <ecNumber evidence="1">5.3.1.14</ecNumber>
    </recommendedName>
</protein>
<accession>B7MQZ3</accession>
<evidence type="ECO:0000255" key="1">
    <source>
        <dbReference type="HAMAP-Rule" id="MF_00541"/>
    </source>
</evidence>
<gene>
    <name evidence="1" type="primary">rhaA</name>
    <name type="ordered locus">ECED1_4604</name>
</gene>
<feature type="chain" id="PRO_1000146582" description="L-rhamnose isomerase">
    <location>
        <begin position="1"/>
        <end position="419"/>
    </location>
</feature>
<feature type="binding site" evidence="1">
    <location>
        <position position="262"/>
    </location>
    <ligand>
        <name>Mn(2+)</name>
        <dbReference type="ChEBI" id="CHEBI:29035"/>
    </ligand>
</feature>
<feature type="binding site" evidence="1">
    <location>
        <position position="294"/>
    </location>
    <ligand>
        <name>Mn(2+)</name>
        <dbReference type="ChEBI" id="CHEBI:29035"/>
    </ligand>
</feature>
<feature type="binding site" evidence="1">
    <location>
        <position position="296"/>
    </location>
    <ligand>
        <name>Mn(2+)</name>
        <dbReference type="ChEBI" id="CHEBI:29035"/>
    </ligand>
</feature>